<dbReference type="EC" id="3.1.15.-"/>
<dbReference type="EMBL" id="AE014297">
    <property type="protein sequence ID" value="AAF56185.1"/>
    <property type="molecule type" value="Genomic_DNA"/>
</dbReference>
<dbReference type="EMBL" id="AY061251">
    <property type="protein sequence ID" value="AAL28799.1"/>
    <property type="molecule type" value="mRNA"/>
</dbReference>
<dbReference type="RefSeq" id="NP_651184.1">
    <property type="nucleotide sequence ID" value="NM_142927.3"/>
</dbReference>
<dbReference type="SMR" id="Q9VCI0"/>
<dbReference type="BioGRID" id="67749">
    <property type="interactions" value="9"/>
</dbReference>
<dbReference type="DIP" id="DIP-17679N"/>
<dbReference type="FunCoup" id="Q9VCI0">
    <property type="interactions" value="2440"/>
</dbReference>
<dbReference type="IntAct" id="Q9VCI0">
    <property type="interactions" value="7"/>
</dbReference>
<dbReference type="STRING" id="7227.FBpp0083854"/>
<dbReference type="PaxDb" id="7227-FBpp0083854"/>
<dbReference type="DNASU" id="42811"/>
<dbReference type="EnsemblMetazoa" id="FBtr0084463">
    <property type="protein sequence ID" value="FBpp0083854"/>
    <property type="gene ID" value="FBgn0039115"/>
</dbReference>
<dbReference type="GeneID" id="42811"/>
<dbReference type="KEGG" id="dme:Dmel_CG10214"/>
<dbReference type="UCSC" id="CG10214-RA">
    <property type="organism name" value="d. melanogaster"/>
</dbReference>
<dbReference type="AGR" id="FB:FBgn0039115"/>
<dbReference type="FlyBase" id="FBgn0039115">
    <property type="gene designation" value="CG10214"/>
</dbReference>
<dbReference type="VEuPathDB" id="VectorBase:FBgn0039115"/>
<dbReference type="eggNOG" id="KOG3242">
    <property type="taxonomic scope" value="Eukaryota"/>
</dbReference>
<dbReference type="GeneTree" id="ENSGT00390000009255"/>
<dbReference type="HOGENOM" id="CLU_064761_2_0_1"/>
<dbReference type="InParanoid" id="Q9VCI0"/>
<dbReference type="OMA" id="AFFHYRN"/>
<dbReference type="OrthoDB" id="270189at2759"/>
<dbReference type="PhylomeDB" id="Q9VCI0"/>
<dbReference type="BioGRID-ORCS" id="42811">
    <property type="hits" value="0 hits in 1 CRISPR screen"/>
</dbReference>
<dbReference type="GenomeRNAi" id="42811"/>
<dbReference type="PRO" id="PR:Q9VCI0"/>
<dbReference type="Proteomes" id="UP000000803">
    <property type="component" value="Chromosome 3R"/>
</dbReference>
<dbReference type="Bgee" id="FBgn0039115">
    <property type="expression patterns" value="Expressed in fat body cell in dorsal vessel heart and 121 other cell types or tissues"/>
</dbReference>
<dbReference type="GO" id="GO:0005759">
    <property type="term" value="C:mitochondrial matrix"/>
    <property type="evidence" value="ECO:0000250"/>
    <property type="project" value="FlyBase"/>
</dbReference>
<dbReference type="GO" id="GO:0005739">
    <property type="term" value="C:mitochondrion"/>
    <property type="evidence" value="ECO:0000318"/>
    <property type="project" value="GO_Central"/>
</dbReference>
<dbReference type="GO" id="GO:0005634">
    <property type="term" value="C:nucleus"/>
    <property type="evidence" value="ECO:0000250"/>
    <property type="project" value="FlyBase"/>
</dbReference>
<dbReference type="GO" id="GO:0008408">
    <property type="term" value="F:3'-5' exonuclease activity"/>
    <property type="evidence" value="ECO:0000250"/>
    <property type="project" value="FlyBase"/>
</dbReference>
<dbReference type="GO" id="GO:0000175">
    <property type="term" value="F:3'-5'-RNA exonuclease activity"/>
    <property type="evidence" value="ECO:0000318"/>
    <property type="project" value="GO_Central"/>
</dbReference>
<dbReference type="GO" id="GO:0003676">
    <property type="term" value="F:nucleic acid binding"/>
    <property type="evidence" value="ECO:0007669"/>
    <property type="project" value="InterPro"/>
</dbReference>
<dbReference type="GO" id="GO:0006139">
    <property type="term" value="P:nucleobase-containing compound metabolic process"/>
    <property type="evidence" value="ECO:0000250"/>
    <property type="project" value="FlyBase"/>
</dbReference>
<dbReference type="CDD" id="cd06135">
    <property type="entry name" value="Orn"/>
    <property type="match status" value="1"/>
</dbReference>
<dbReference type="FunFam" id="3.30.420.10:FF:000003">
    <property type="entry name" value="Oligoribonuclease"/>
    <property type="match status" value="1"/>
</dbReference>
<dbReference type="Gene3D" id="3.30.420.10">
    <property type="entry name" value="Ribonuclease H-like superfamily/Ribonuclease H"/>
    <property type="match status" value="1"/>
</dbReference>
<dbReference type="InterPro" id="IPR013520">
    <property type="entry name" value="Exonuclease_RNaseT/DNA_pol3"/>
</dbReference>
<dbReference type="InterPro" id="IPR022894">
    <property type="entry name" value="Oligoribonuclease"/>
</dbReference>
<dbReference type="InterPro" id="IPR012337">
    <property type="entry name" value="RNaseH-like_sf"/>
</dbReference>
<dbReference type="InterPro" id="IPR036397">
    <property type="entry name" value="RNaseH_sf"/>
</dbReference>
<dbReference type="NCBIfam" id="NF003765">
    <property type="entry name" value="PRK05359.1"/>
    <property type="match status" value="1"/>
</dbReference>
<dbReference type="PANTHER" id="PTHR11046">
    <property type="entry name" value="OLIGORIBONUCLEASE, MITOCHONDRIAL"/>
    <property type="match status" value="1"/>
</dbReference>
<dbReference type="PANTHER" id="PTHR11046:SF0">
    <property type="entry name" value="OLIGORIBONUCLEASE, MITOCHONDRIAL"/>
    <property type="match status" value="1"/>
</dbReference>
<dbReference type="Pfam" id="PF00929">
    <property type="entry name" value="RNase_T"/>
    <property type="match status" value="1"/>
</dbReference>
<dbReference type="SMART" id="SM00479">
    <property type="entry name" value="EXOIII"/>
    <property type="match status" value="1"/>
</dbReference>
<dbReference type="SUPFAM" id="SSF53098">
    <property type="entry name" value="Ribonuclease H-like"/>
    <property type="match status" value="1"/>
</dbReference>
<feature type="chain" id="PRO_0000111091" description="Probable oligoribonuclease">
    <location>
        <begin position="1"/>
        <end position="211"/>
    </location>
</feature>
<feature type="domain" description="Exonuclease">
    <location>
        <begin position="38"/>
        <end position="202"/>
    </location>
</feature>
<feature type="active site" evidence="2">
    <location>
        <position position="159"/>
    </location>
</feature>
<sequence length="211" mass="24298">MLAHLRRVGLSLNRQIRSHIAFNSNDRMSSTCGLDTDIVWMDLEMTGLDIEKDKILEVACIITDQDLNVKSEGPCFAINHPQEVYDSMNEWCMKHHYNSGLIDRCKSSDVNLEEASNLVLSYLEKNIPKRACPLGGNSVYTDRLFIMKFMPLVDAYLHYRIVDVSTIKELAKRWHPAILDSAPKKSFTHRSLDDIRESIKELAYYKANLFK</sequence>
<evidence type="ECO:0000250" key="1"/>
<evidence type="ECO:0000255" key="2"/>
<evidence type="ECO:0000305" key="3"/>
<name>ORN_DROME</name>
<comment type="function">
    <text evidence="1">3'-to-5' exoribonuclease specific for small oligoribonucleotides.</text>
</comment>
<comment type="similarity">
    <text evidence="3">Belongs to the oligoribonuclease family.</text>
</comment>
<organism>
    <name type="scientific">Drosophila melanogaster</name>
    <name type="common">Fruit fly</name>
    <dbReference type="NCBI Taxonomy" id="7227"/>
    <lineage>
        <taxon>Eukaryota</taxon>
        <taxon>Metazoa</taxon>
        <taxon>Ecdysozoa</taxon>
        <taxon>Arthropoda</taxon>
        <taxon>Hexapoda</taxon>
        <taxon>Insecta</taxon>
        <taxon>Pterygota</taxon>
        <taxon>Neoptera</taxon>
        <taxon>Endopterygota</taxon>
        <taxon>Diptera</taxon>
        <taxon>Brachycera</taxon>
        <taxon>Muscomorpha</taxon>
        <taxon>Ephydroidea</taxon>
        <taxon>Drosophilidae</taxon>
        <taxon>Drosophila</taxon>
        <taxon>Sophophora</taxon>
    </lineage>
</organism>
<reference key="1">
    <citation type="journal article" date="2000" name="Science">
        <title>The genome sequence of Drosophila melanogaster.</title>
        <authorList>
            <person name="Adams M.D."/>
            <person name="Celniker S.E."/>
            <person name="Holt R.A."/>
            <person name="Evans C.A."/>
            <person name="Gocayne J.D."/>
            <person name="Amanatides P.G."/>
            <person name="Scherer S.E."/>
            <person name="Li P.W."/>
            <person name="Hoskins R.A."/>
            <person name="Galle R.F."/>
            <person name="George R.A."/>
            <person name="Lewis S.E."/>
            <person name="Richards S."/>
            <person name="Ashburner M."/>
            <person name="Henderson S.N."/>
            <person name="Sutton G.G."/>
            <person name="Wortman J.R."/>
            <person name="Yandell M.D."/>
            <person name="Zhang Q."/>
            <person name="Chen L.X."/>
            <person name="Brandon R.C."/>
            <person name="Rogers Y.-H.C."/>
            <person name="Blazej R.G."/>
            <person name="Champe M."/>
            <person name="Pfeiffer B.D."/>
            <person name="Wan K.H."/>
            <person name="Doyle C."/>
            <person name="Baxter E.G."/>
            <person name="Helt G."/>
            <person name="Nelson C.R."/>
            <person name="Miklos G.L.G."/>
            <person name="Abril J.F."/>
            <person name="Agbayani A."/>
            <person name="An H.-J."/>
            <person name="Andrews-Pfannkoch C."/>
            <person name="Baldwin D."/>
            <person name="Ballew R.M."/>
            <person name="Basu A."/>
            <person name="Baxendale J."/>
            <person name="Bayraktaroglu L."/>
            <person name="Beasley E.M."/>
            <person name="Beeson K.Y."/>
            <person name="Benos P.V."/>
            <person name="Berman B.P."/>
            <person name="Bhandari D."/>
            <person name="Bolshakov S."/>
            <person name="Borkova D."/>
            <person name="Botchan M.R."/>
            <person name="Bouck J."/>
            <person name="Brokstein P."/>
            <person name="Brottier P."/>
            <person name="Burtis K.C."/>
            <person name="Busam D.A."/>
            <person name="Butler H."/>
            <person name="Cadieu E."/>
            <person name="Center A."/>
            <person name="Chandra I."/>
            <person name="Cherry J.M."/>
            <person name="Cawley S."/>
            <person name="Dahlke C."/>
            <person name="Davenport L.B."/>
            <person name="Davies P."/>
            <person name="de Pablos B."/>
            <person name="Delcher A."/>
            <person name="Deng Z."/>
            <person name="Mays A.D."/>
            <person name="Dew I."/>
            <person name="Dietz S.M."/>
            <person name="Dodson K."/>
            <person name="Doup L.E."/>
            <person name="Downes M."/>
            <person name="Dugan-Rocha S."/>
            <person name="Dunkov B.C."/>
            <person name="Dunn P."/>
            <person name="Durbin K.J."/>
            <person name="Evangelista C.C."/>
            <person name="Ferraz C."/>
            <person name="Ferriera S."/>
            <person name="Fleischmann W."/>
            <person name="Fosler C."/>
            <person name="Gabrielian A.E."/>
            <person name="Garg N.S."/>
            <person name="Gelbart W.M."/>
            <person name="Glasser K."/>
            <person name="Glodek A."/>
            <person name="Gong F."/>
            <person name="Gorrell J.H."/>
            <person name="Gu Z."/>
            <person name="Guan P."/>
            <person name="Harris M."/>
            <person name="Harris N.L."/>
            <person name="Harvey D.A."/>
            <person name="Heiman T.J."/>
            <person name="Hernandez J.R."/>
            <person name="Houck J."/>
            <person name="Hostin D."/>
            <person name="Houston K.A."/>
            <person name="Howland T.J."/>
            <person name="Wei M.-H."/>
            <person name="Ibegwam C."/>
            <person name="Jalali M."/>
            <person name="Kalush F."/>
            <person name="Karpen G.H."/>
            <person name="Ke Z."/>
            <person name="Kennison J.A."/>
            <person name="Ketchum K.A."/>
            <person name="Kimmel B.E."/>
            <person name="Kodira C.D."/>
            <person name="Kraft C.L."/>
            <person name="Kravitz S."/>
            <person name="Kulp D."/>
            <person name="Lai Z."/>
            <person name="Lasko P."/>
            <person name="Lei Y."/>
            <person name="Levitsky A.A."/>
            <person name="Li J.H."/>
            <person name="Li Z."/>
            <person name="Liang Y."/>
            <person name="Lin X."/>
            <person name="Liu X."/>
            <person name="Mattei B."/>
            <person name="McIntosh T.C."/>
            <person name="McLeod M.P."/>
            <person name="McPherson D."/>
            <person name="Merkulov G."/>
            <person name="Milshina N.V."/>
            <person name="Mobarry C."/>
            <person name="Morris J."/>
            <person name="Moshrefi A."/>
            <person name="Mount S.M."/>
            <person name="Moy M."/>
            <person name="Murphy B."/>
            <person name="Murphy L."/>
            <person name="Muzny D.M."/>
            <person name="Nelson D.L."/>
            <person name="Nelson D.R."/>
            <person name="Nelson K.A."/>
            <person name="Nixon K."/>
            <person name="Nusskern D.R."/>
            <person name="Pacleb J.M."/>
            <person name="Palazzolo M."/>
            <person name="Pittman G.S."/>
            <person name="Pan S."/>
            <person name="Pollard J."/>
            <person name="Puri V."/>
            <person name="Reese M.G."/>
            <person name="Reinert K."/>
            <person name="Remington K."/>
            <person name="Saunders R.D.C."/>
            <person name="Scheeler F."/>
            <person name="Shen H."/>
            <person name="Shue B.C."/>
            <person name="Siden-Kiamos I."/>
            <person name="Simpson M."/>
            <person name="Skupski M.P."/>
            <person name="Smith T.J."/>
            <person name="Spier E."/>
            <person name="Spradling A.C."/>
            <person name="Stapleton M."/>
            <person name="Strong R."/>
            <person name="Sun E."/>
            <person name="Svirskas R."/>
            <person name="Tector C."/>
            <person name="Turner R."/>
            <person name="Venter E."/>
            <person name="Wang A.H."/>
            <person name="Wang X."/>
            <person name="Wang Z.-Y."/>
            <person name="Wassarman D.A."/>
            <person name="Weinstock G.M."/>
            <person name="Weissenbach J."/>
            <person name="Williams S.M."/>
            <person name="Woodage T."/>
            <person name="Worley K.C."/>
            <person name="Wu D."/>
            <person name="Yang S."/>
            <person name="Yao Q.A."/>
            <person name="Ye J."/>
            <person name="Yeh R.-F."/>
            <person name="Zaveri J.S."/>
            <person name="Zhan M."/>
            <person name="Zhang G."/>
            <person name="Zhao Q."/>
            <person name="Zheng L."/>
            <person name="Zheng X.H."/>
            <person name="Zhong F.N."/>
            <person name="Zhong W."/>
            <person name="Zhou X."/>
            <person name="Zhu S.C."/>
            <person name="Zhu X."/>
            <person name="Smith H.O."/>
            <person name="Gibbs R.A."/>
            <person name="Myers E.W."/>
            <person name="Rubin G.M."/>
            <person name="Venter J.C."/>
        </authorList>
    </citation>
    <scope>NUCLEOTIDE SEQUENCE [LARGE SCALE GENOMIC DNA]</scope>
    <source>
        <strain>Berkeley</strain>
    </source>
</reference>
<reference key="2">
    <citation type="journal article" date="2002" name="Genome Biol.">
        <title>Annotation of the Drosophila melanogaster euchromatic genome: a systematic review.</title>
        <authorList>
            <person name="Misra S."/>
            <person name="Crosby M.A."/>
            <person name="Mungall C.J."/>
            <person name="Matthews B.B."/>
            <person name="Campbell K.S."/>
            <person name="Hradecky P."/>
            <person name="Huang Y."/>
            <person name="Kaminker J.S."/>
            <person name="Millburn G.H."/>
            <person name="Prochnik S.E."/>
            <person name="Smith C.D."/>
            <person name="Tupy J.L."/>
            <person name="Whitfield E.J."/>
            <person name="Bayraktaroglu L."/>
            <person name="Berman B.P."/>
            <person name="Bettencourt B.R."/>
            <person name="Celniker S.E."/>
            <person name="de Grey A.D.N.J."/>
            <person name="Drysdale R.A."/>
            <person name="Harris N.L."/>
            <person name="Richter J."/>
            <person name="Russo S."/>
            <person name="Schroeder A.J."/>
            <person name="Shu S.Q."/>
            <person name="Stapleton M."/>
            <person name="Yamada C."/>
            <person name="Ashburner M."/>
            <person name="Gelbart W.M."/>
            <person name="Rubin G.M."/>
            <person name="Lewis S.E."/>
        </authorList>
    </citation>
    <scope>GENOME REANNOTATION</scope>
    <source>
        <strain>Berkeley</strain>
    </source>
</reference>
<reference key="3">
    <citation type="journal article" date="2002" name="Genome Biol.">
        <title>A Drosophila full-length cDNA resource.</title>
        <authorList>
            <person name="Stapleton M."/>
            <person name="Carlson J.W."/>
            <person name="Brokstein P."/>
            <person name="Yu C."/>
            <person name="Champe M."/>
            <person name="George R.A."/>
            <person name="Guarin H."/>
            <person name="Kronmiller B."/>
            <person name="Pacleb J.M."/>
            <person name="Park S."/>
            <person name="Wan K.H."/>
            <person name="Rubin G.M."/>
            <person name="Celniker S.E."/>
        </authorList>
    </citation>
    <scope>NUCLEOTIDE SEQUENCE [LARGE SCALE MRNA]</scope>
    <source>
        <strain>Berkeley</strain>
        <tissue>Embryo</tissue>
    </source>
</reference>
<gene>
    <name type="ORF">CG10214</name>
</gene>
<proteinExistence type="evidence at transcript level"/>
<protein>
    <recommendedName>
        <fullName>Probable oligoribonuclease</fullName>
        <ecNumber>3.1.15.-</ecNumber>
    </recommendedName>
</protein>
<keyword id="KW-0269">Exonuclease</keyword>
<keyword id="KW-0378">Hydrolase</keyword>
<keyword id="KW-0540">Nuclease</keyword>
<keyword id="KW-1185">Reference proteome</keyword>
<accession>Q9VCI0</accession>